<organism>
    <name type="scientific">Yersinia pestis bv. Antiqua (strain Antiqua)</name>
    <dbReference type="NCBI Taxonomy" id="360102"/>
    <lineage>
        <taxon>Bacteria</taxon>
        <taxon>Pseudomonadati</taxon>
        <taxon>Pseudomonadota</taxon>
        <taxon>Gammaproteobacteria</taxon>
        <taxon>Enterobacterales</taxon>
        <taxon>Yersiniaceae</taxon>
        <taxon>Yersinia</taxon>
    </lineage>
</organism>
<sequence length="183" mass="20780">MDLNISTALRSFTQRYIDLWQQQTGHLPASKELYGVPSPCIVETGEDQVFWQPQAFLPEATLTNIERALEIQLHPDIHDFYTQQYAGDMMADLGNHRFTLLQVWSEDDFIRLQENLIGHLVTQKRLKLSPTLFLATTSSEMTMASLCNVSGNVVLEQFGSDKRTLLASTLSHFLDALRPVLPE</sequence>
<evidence type="ECO:0000255" key="1">
    <source>
        <dbReference type="HAMAP-Rule" id="MF_01104"/>
    </source>
</evidence>
<reference key="1">
    <citation type="journal article" date="2006" name="J. Bacteriol.">
        <title>Complete genome sequence of Yersinia pestis strains Antiqua and Nepal516: evidence of gene reduction in an emerging pathogen.</title>
        <authorList>
            <person name="Chain P.S.G."/>
            <person name="Hu P."/>
            <person name="Malfatti S.A."/>
            <person name="Radnedge L."/>
            <person name="Larimer F."/>
            <person name="Vergez L.M."/>
            <person name="Worsham P."/>
            <person name="Chu M.C."/>
            <person name="Andersen G.L."/>
        </authorList>
    </citation>
    <scope>NUCLEOTIDE SEQUENCE [LARGE SCALE GENOMIC DNA]</scope>
    <source>
        <strain>Antiqua</strain>
    </source>
</reference>
<name>SYDP_YERPA</name>
<keyword id="KW-0997">Cell inner membrane</keyword>
<keyword id="KW-1003">Cell membrane</keyword>
<keyword id="KW-0472">Membrane</keyword>
<accession>Q1CAP5</accession>
<protein>
    <recommendedName>
        <fullName evidence="1">Protein Syd</fullName>
    </recommendedName>
</protein>
<feature type="chain" id="PRO_0000298270" description="Protein Syd">
    <location>
        <begin position="1"/>
        <end position="183"/>
    </location>
</feature>
<comment type="function">
    <text evidence="1">Interacts with the SecY protein in vivo. May bind preferentially to an uncomplexed state of SecY, thus functioning either as a chelating agent for excess SecY in the cell or as a regulatory factor that negatively controls the translocase function.</text>
</comment>
<comment type="subcellular location">
    <subcellularLocation>
        <location evidence="1">Cell inner membrane</location>
        <topology evidence="1">Peripheral membrane protein</topology>
        <orientation evidence="1">Cytoplasmic side</orientation>
    </subcellularLocation>
    <text evidence="1">Loosely associated with the cytoplasmic side of the inner membrane, probably via SecY.</text>
</comment>
<comment type="similarity">
    <text evidence="1">Belongs to the Syd family.</text>
</comment>
<gene>
    <name evidence="1" type="primary">syd</name>
    <name type="ordered locus">YPA_0509</name>
</gene>
<proteinExistence type="inferred from homology"/>
<dbReference type="EMBL" id="CP000308">
    <property type="protein sequence ID" value="ABG12477.1"/>
    <property type="molecule type" value="Genomic_DNA"/>
</dbReference>
<dbReference type="RefSeq" id="WP_002212123.1">
    <property type="nucleotide sequence ID" value="NZ_CP009906.1"/>
</dbReference>
<dbReference type="SMR" id="Q1CAP5"/>
<dbReference type="GeneID" id="57977526"/>
<dbReference type="KEGG" id="ypa:YPA_0509"/>
<dbReference type="Proteomes" id="UP000001971">
    <property type="component" value="Chromosome"/>
</dbReference>
<dbReference type="GO" id="GO:0009898">
    <property type="term" value="C:cytoplasmic side of plasma membrane"/>
    <property type="evidence" value="ECO:0007669"/>
    <property type="project" value="InterPro"/>
</dbReference>
<dbReference type="CDD" id="cd16323">
    <property type="entry name" value="Syd"/>
    <property type="match status" value="1"/>
</dbReference>
<dbReference type="Gene3D" id="3.40.1580.20">
    <property type="entry name" value="Syd protein"/>
    <property type="match status" value="1"/>
</dbReference>
<dbReference type="HAMAP" id="MF_01104">
    <property type="entry name" value="Syd"/>
    <property type="match status" value="1"/>
</dbReference>
<dbReference type="InterPro" id="IPR009948">
    <property type="entry name" value="Syd"/>
</dbReference>
<dbReference type="InterPro" id="IPR038228">
    <property type="entry name" value="Syd_sf"/>
</dbReference>
<dbReference type="NCBIfam" id="NF003439">
    <property type="entry name" value="PRK04968.1"/>
    <property type="match status" value="1"/>
</dbReference>
<dbReference type="Pfam" id="PF07348">
    <property type="entry name" value="Syd"/>
    <property type="match status" value="1"/>
</dbReference>